<organism>
    <name type="scientific">Mus musculus</name>
    <name type="common">Mouse</name>
    <dbReference type="NCBI Taxonomy" id="10090"/>
    <lineage>
        <taxon>Eukaryota</taxon>
        <taxon>Metazoa</taxon>
        <taxon>Chordata</taxon>
        <taxon>Craniata</taxon>
        <taxon>Vertebrata</taxon>
        <taxon>Euteleostomi</taxon>
        <taxon>Mammalia</taxon>
        <taxon>Eutheria</taxon>
        <taxon>Euarchontoglires</taxon>
        <taxon>Glires</taxon>
        <taxon>Rodentia</taxon>
        <taxon>Myomorpha</taxon>
        <taxon>Muroidea</taxon>
        <taxon>Muridae</taxon>
        <taxon>Murinae</taxon>
        <taxon>Mus</taxon>
        <taxon>Mus</taxon>
    </lineage>
</organism>
<protein>
    <recommendedName>
        <fullName>Claudin-9</fullName>
    </recommendedName>
</protein>
<gene>
    <name type="primary">Cldn9</name>
</gene>
<evidence type="ECO:0000250" key="1"/>
<evidence type="ECO:0000250" key="2">
    <source>
        <dbReference type="UniProtKB" id="O95484"/>
    </source>
</evidence>
<evidence type="ECO:0000255" key="3"/>
<evidence type="ECO:0000305" key="4"/>
<dbReference type="EMBL" id="AF124424">
    <property type="protein sequence ID" value="AAD17319.1"/>
    <property type="molecule type" value="Genomic_DNA"/>
</dbReference>
<dbReference type="EMBL" id="AC154766">
    <property type="status" value="NOT_ANNOTATED_CDS"/>
    <property type="molecule type" value="Genomic_DNA"/>
</dbReference>
<dbReference type="EMBL" id="CH466606">
    <property type="protein sequence ID" value="EDL22263.1"/>
    <property type="molecule type" value="Genomic_DNA"/>
</dbReference>
<dbReference type="EMBL" id="BC058186">
    <property type="protein sequence ID" value="AAH58186.1"/>
    <property type="molecule type" value="mRNA"/>
</dbReference>
<dbReference type="CCDS" id="CCDS28458.1"/>
<dbReference type="RefSeq" id="NP_064689.2">
    <property type="nucleotide sequence ID" value="NM_020293.3"/>
</dbReference>
<dbReference type="SMR" id="Q9Z0S7"/>
<dbReference type="FunCoup" id="Q9Z0S7">
    <property type="interactions" value="245"/>
</dbReference>
<dbReference type="STRING" id="10090.ENSMUSP00000093236"/>
<dbReference type="PhosphoSitePlus" id="Q9Z0S7"/>
<dbReference type="PaxDb" id="10090-ENSMUSP00000093236"/>
<dbReference type="ProteomicsDB" id="283380"/>
<dbReference type="ABCD" id="Q9Z0S7">
    <property type="antibodies" value="9 sequenced antibodies"/>
</dbReference>
<dbReference type="Antibodypedia" id="10653">
    <property type="antibodies" value="91 antibodies from 28 providers"/>
</dbReference>
<dbReference type="DNASU" id="56863"/>
<dbReference type="Ensembl" id="ENSMUST00000085989.8">
    <property type="protein sequence ID" value="ENSMUSP00000093236.5"/>
    <property type="gene ID" value="ENSMUSG00000066720.8"/>
</dbReference>
<dbReference type="GeneID" id="56863"/>
<dbReference type="KEGG" id="mmu:56863"/>
<dbReference type="UCSC" id="uc008asx.2">
    <property type="organism name" value="mouse"/>
</dbReference>
<dbReference type="AGR" id="MGI:1913100"/>
<dbReference type="CTD" id="9080"/>
<dbReference type="MGI" id="MGI:1913100">
    <property type="gene designation" value="Cldn9"/>
</dbReference>
<dbReference type="VEuPathDB" id="HostDB:ENSMUSG00000066720"/>
<dbReference type="eggNOG" id="ENOG502QRZ8">
    <property type="taxonomic scope" value="Eukaryota"/>
</dbReference>
<dbReference type="GeneTree" id="ENSGT00940000162145"/>
<dbReference type="HOGENOM" id="CLU_076370_1_2_1"/>
<dbReference type="InParanoid" id="Q9Z0S7"/>
<dbReference type="OMA" id="DRYNGAK"/>
<dbReference type="OrthoDB" id="8830244at2759"/>
<dbReference type="PhylomeDB" id="Q9Z0S7"/>
<dbReference type="TreeFam" id="TF331936"/>
<dbReference type="BioGRID-ORCS" id="56863">
    <property type="hits" value="1 hit in 82 CRISPR screens"/>
</dbReference>
<dbReference type="PRO" id="PR:Q9Z0S7"/>
<dbReference type="Proteomes" id="UP000000589">
    <property type="component" value="Chromosome 17"/>
</dbReference>
<dbReference type="RNAct" id="Q9Z0S7">
    <property type="molecule type" value="protein"/>
</dbReference>
<dbReference type="Bgee" id="ENSMUSG00000066720">
    <property type="expression patterns" value="Expressed in vestibular epithelium and 105 other cell types or tissues"/>
</dbReference>
<dbReference type="GO" id="GO:0005923">
    <property type="term" value="C:bicellular tight junction"/>
    <property type="evidence" value="ECO:0000314"/>
    <property type="project" value="MGI"/>
</dbReference>
<dbReference type="GO" id="GO:0043231">
    <property type="term" value="C:intracellular membrane-bounded organelle"/>
    <property type="evidence" value="ECO:0007669"/>
    <property type="project" value="Ensembl"/>
</dbReference>
<dbReference type="GO" id="GO:0005886">
    <property type="term" value="C:plasma membrane"/>
    <property type="evidence" value="ECO:0000314"/>
    <property type="project" value="MGI"/>
</dbReference>
<dbReference type="GO" id="GO:0042802">
    <property type="term" value="F:identical protein binding"/>
    <property type="evidence" value="ECO:0000250"/>
    <property type="project" value="UniProtKB"/>
</dbReference>
<dbReference type="GO" id="GO:0005198">
    <property type="term" value="F:structural molecule activity"/>
    <property type="evidence" value="ECO:0007669"/>
    <property type="project" value="InterPro"/>
</dbReference>
<dbReference type="GO" id="GO:0001618">
    <property type="term" value="F:virus receptor activity"/>
    <property type="evidence" value="ECO:0007669"/>
    <property type="project" value="Ensembl"/>
</dbReference>
<dbReference type="GO" id="GO:0016338">
    <property type="term" value="P:calcium-independent cell-cell adhesion via plasma membrane cell-adhesion molecules"/>
    <property type="evidence" value="ECO:0000250"/>
    <property type="project" value="UniProtKB"/>
</dbReference>
<dbReference type="GO" id="GO:0045216">
    <property type="term" value="P:cell-cell junction organization"/>
    <property type="evidence" value="ECO:0000314"/>
    <property type="project" value="MGI"/>
</dbReference>
<dbReference type="GO" id="GO:0120193">
    <property type="term" value="P:tight junction organization"/>
    <property type="evidence" value="ECO:0000314"/>
    <property type="project" value="MGI"/>
</dbReference>
<dbReference type="FunFam" id="1.20.140.150:FF:000001">
    <property type="entry name" value="Claudin"/>
    <property type="match status" value="1"/>
</dbReference>
<dbReference type="Gene3D" id="1.20.140.150">
    <property type="match status" value="1"/>
</dbReference>
<dbReference type="InterPro" id="IPR006187">
    <property type="entry name" value="Claudin"/>
</dbReference>
<dbReference type="InterPro" id="IPR003553">
    <property type="entry name" value="Claudin9"/>
</dbReference>
<dbReference type="InterPro" id="IPR017974">
    <property type="entry name" value="Claudin_CS"/>
</dbReference>
<dbReference type="InterPro" id="IPR004031">
    <property type="entry name" value="PMP22/EMP/MP20/Claudin"/>
</dbReference>
<dbReference type="PANTHER" id="PTHR12002">
    <property type="entry name" value="CLAUDIN"/>
    <property type="match status" value="1"/>
</dbReference>
<dbReference type="Pfam" id="PF00822">
    <property type="entry name" value="PMP22_Claudin"/>
    <property type="match status" value="1"/>
</dbReference>
<dbReference type="PRINTS" id="PR01077">
    <property type="entry name" value="CLAUDIN"/>
</dbReference>
<dbReference type="PRINTS" id="PR01382">
    <property type="entry name" value="CLAUDIN9"/>
</dbReference>
<dbReference type="PROSITE" id="PS01346">
    <property type="entry name" value="CLAUDIN"/>
    <property type="match status" value="1"/>
</dbReference>
<comment type="function">
    <text evidence="1">Plays a major role in tight junction-specific obliteration of the intercellular space, through calcium-independent cell-adhesion activity.</text>
</comment>
<comment type="subunit">
    <text evidence="2">Interacts with CLDN1, CD81 and OCLN.</text>
</comment>
<comment type="subcellular location">
    <subcellularLocation>
        <location>Cell junction</location>
        <location>Tight junction</location>
    </subcellularLocation>
    <subcellularLocation>
        <location evidence="2">Cell membrane</location>
        <topology evidence="3">Multi-pass membrane protein</topology>
    </subcellularLocation>
</comment>
<comment type="similarity">
    <text evidence="4">Belongs to the claudin family.</text>
</comment>
<reference key="1">
    <citation type="submission" date="1999-01" db="EMBL/GenBank/DDBJ databases">
        <authorList>
            <person name="Morita K."/>
            <person name="Furuse M."/>
            <person name="Tsukita S."/>
        </authorList>
    </citation>
    <scope>NUCLEOTIDE SEQUENCE [GENOMIC DNA]</scope>
</reference>
<reference key="2">
    <citation type="journal article" date="2009" name="PLoS Biol.">
        <title>Lineage-specific biology revealed by a finished genome assembly of the mouse.</title>
        <authorList>
            <person name="Church D.M."/>
            <person name="Goodstadt L."/>
            <person name="Hillier L.W."/>
            <person name="Zody M.C."/>
            <person name="Goldstein S."/>
            <person name="She X."/>
            <person name="Bult C.J."/>
            <person name="Agarwala R."/>
            <person name="Cherry J.L."/>
            <person name="DiCuccio M."/>
            <person name="Hlavina W."/>
            <person name="Kapustin Y."/>
            <person name="Meric P."/>
            <person name="Maglott D."/>
            <person name="Birtle Z."/>
            <person name="Marques A.C."/>
            <person name="Graves T."/>
            <person name="Zhou S."/>
            <person name="Teague B."/>
            <person name="Potamousis K."/>
            <person name="Churas C."/>
            <person name="Place M."/>
            <person name="Herschleb J."/>
            <person name="Runnheim R."/>
            <person name="Forrest D."/>
            <person name="Amos-Landgraf J."/>
            <person name="Schwartz D.C."/>
            <person name="Cheng Z."/>
            <person name="Lindblad-Toh K."/>
            <person name="Eichler E.E."/>
            <person name="Ponting C.P."/>
        </authorList>
    </citation>
    <scope>NUCLEOTIDE SEQUENCE [LARGE SCALE GENOMIC DNA]</scope>
    <source>
        <strain>C57BL/6J</strain>
    </source>
</reference>
<reference key="3">
    <citation type="submission" date="2005-07" db="EMBL/GenBank/DDBJ databases">
        <authorList>
            <person name="Mural R.J."/>
            <person name="Adams M.D."/>
            <person name="Myers E.W."/>
            <person name="Smith H.O."/>
            <person name="Venter J.C."/>
        </authorList>
    </citation>
    <scope>NUCLEOTIDE SEQUENCE [LARGE SCALE GENOMIC DNA]</scope>
</reference>
<reference key="4">
    <citation type="journal article" date="2004" name="Genome Res.">
        <title>The status, quality, and expansion of the NIH full-length cDNA project: the Mammalian Gene Collection (MGC).</title>
        <authorList>
            <consortium name="The MGC Project Team"/>
        </authorList>
    </citation>
    <scope>NUCLEOTIDE SEQUENCE [LARGE SCALE MRNA]</scope>
    <source>
        <strain>FVB/N</strain>
        <tissue>Mammary tumor</tissue>
    </source>
</reference>
<name>CLD9_MOUSE</name>
<feature type="chain" id="PRO_0000144756" description="Claudin-9">
    <location>
        <begin position="1"/>
        <end position="217"/>
    </location>
</feature>
<feature type="topological domain" description="Cytoplasmic" evidence="3">
    <location>
        <begin position="1"/>
        <end position="12"/>
    </location>
</feature>
<feature type="transmembrane region" description="Helical" evidence="3">
    <location>
        <begin position="13"/>
        <end position="33"/>
    </location>
</feature>
<feature type="topological domain" description="Extracellular" evidence="3">
    <location>
        <begin position="34"/>
        <end position="81"/>
    </location>
</feature>
<feature type="transmembrane region" description="Helical" evidence="3">
    <location>
        <begin position="82"/>
        <end position="102"/>
    </location>
</feature>
<feature type="topological domain" description="Cytoplasmic" evidence="3">
    <location>
        <begin position="103"/>
        <end position="116"/>
    </location>
</feature>
<feature type="transmembrane region" description="Helical" evidence="3">
    <location>
        <begin position="117"/>
        <end position="137"/>
    </location>
</feature>
<feature type="topological domain" description="Extracellular" evidence="3">
    <location>
        <begin position="138"/>
        <end position="159"/>
    </location>
</feature>
<feature type="transmembrane region" description="Helical" evidence="3">
    <location>
        <begin position="160"/>
        <end position="180"/>
    </location>
</feature>
<feature type="topological domain" description="Cytoplasmic" evidence="3">
    <location>
        <begin position="181"/>
        <end position="217"/>
    </location>
</feature>
<feature type="sequence conflict" description="In Ref. 1; AAD17319." evidence="4" ref="1">
    <original>L</original>
    <variation>F</variation>
    <location>
        <position position="8"/>
    </location>
</feature>
<feature type="sequence conflict" description="In Ref. 1; AAD17319." evidence="4" ref="1">
    <original>M</original>
    <variation>R</variation>
    <location>
        <position position="11"/>
    </location>
</feature>
<feature type="sequence conflict" description="In Ref. 1; AAD17319." evidence="4" ref="1">
    <original>A</original>
    <variation>V</variation>
    <location>
        <position position="14"/>
    </location>
</feature>
<proteinExistence type="evidence at transcript level"/>
<accession>Q9Z0S7</accession>
<accession>Q6PEA4</accession>
<sequence length="217" mass="22897">MASTGLELLGMTLAVLGWLGTLVSCALPLWKVTAFIGNSIVVAQVVWEGLWMSCVVQSTGQMQCKVYDSLLALPQDLQAARALCVVALLLALLGLLVAITGAQCTTCVEDEGAKARIVLTAGVLLLLSGILVLIPVCWTAHAIIQDFYNPLVAEALKRELGASLYLGWAAAALLMLGGGLLCCTCPPSHFERPRGPRLGYSIPSRSGASGLDKRDYV</sequence>
<keyword id="KW-0965">Cell junction</keyword>
<keyword id="KW-1003">Cell membrane</keyword>
<keyword id="KW-0472">Membrane</keyword>
<keyword id="KW-1185">Reference proteome</keyword>
<keyword id="KW-0796">Tight junction</keyword>
<keyword id="KW-0812">Transmembrane</keyword>
<keyword id="KW-1133">Transmembrane helix</keyword>